<name>DNE21_AGRFC</name>
<evidence type="ECO:0000255" key="1">
    <source>
        <dbReference type="HAMAP-Rule" id="MF_01902"/>
    </source>
</evidence>
<evidence type="ECO:0000256" key="2">
    <source>
        <dbReference type="SAM" id="MobiDB-lite"/>
    </source>
</evidence>
<proteinExistence type="inferred from homology"/>
<keyword id="KW-0963">Cytoplasm</keyword>
<keyword id="KW-0227">DNA damage</keyword>
<keyword id="KW-0234">DNA repair</keyword>
<keyword id="KW-0235">DNA replication</keyword>
<keyword id="KW-0239">DNA-directed DNA polymerase</keyword>
<keyword id="KW-0548">Nucleotidyltransferase</keyword>
<keyword id="KW-1185">Reference proteome</keyword>
<keyword id="KW-0808">Transferase</keyword>
<protein>
    <recommendedName>
        <fullName evidence="1">Error-prone DNA polymerase 1</fullName>
        <ecNumber evidence="1">2.7.7.7</ecNumber>
    </recommendedName>
</protein>
<comment type="function">
    <text evidence="1">DNA polymerase involved in damage-induced mutagenesis and translesion synthesis (TLS). It is not the major replicative DNA polymerase.</text>
</comment>
<comment type="catalytic activity">
    <reaction evidence="1">
        <text>DNA(n) + a 2'-deoxyribonucleoside 5'-triphosphate = DNA(n+1) + diphosphate</text>
        <dbReference type="Rhea" id="RHEA:22508"/>
        <dbReference type="Rhea" id="RHEA-COMP:17339"/>
        <dbReference type="Rhea" id="RHEA-COMP:17340"/>
        <dbReference type="ChEBI" id="CHEBI:33019"/>
        <dbReference type="ChEBI" id="CHEBI:61560"/>
        <dbReference type="ChEBI" id="CHEBI:173112"/>
        <dbReference type="EC" id="2.7.7.7"/>
    </reaction>
</comment>
<comment type="subcellular location">
    <subcellularLocation>
        <location evidence="1">Cytoplasm</location>
    </subcellularLocation>
</comment>
<comment type="similarity">
    <text evidence="1">Belongs to the DNA polymerase type-C family. DnaE2 subfamily.</text>
</comment>
<organism>
    <name type="scientific">Agrobacterium fabrum (strain C58 / ATCC 33970)</name>
    <name type="common">Agrobacterium tumefaciens (strain C58)</name>
    <dbReference type="NCBI Taxonomy" id="176299"/>
    <lineage>
        <taxon>Bacteria</taxon>
        <taxon>Pseudomonadati</taxon>
        <taxon>Pseudomonadota</taxon>
        <taxon>Alphaproteobacteria</taxon>
        <taxon>Hyphomicrobiales</taxon>
        <taxon>Rhizobiaceae</taxon>
        <taxon>Rhizobium/Agrobacterium group</taxon>
        <taxon>Agrobacterium</taxon>
        <taxon>Agrobacterium tumefaciens complex</taxon>
    </lineage>
</organism>
<gene>
    <name evidence="1" type="primary">dnaE2-1</name>
    <name type="ordered locus">Atu3228</name>
    <name type="ORF">AGR_L_3173</name>
</gene>
<reference key="1">
    <citation type="journal article" date="2001" name="Science">
        <title>The genome of the natural genetic engineer Agrobacterium tumefaciens C58.</title>
        <authorList>
            <person name="Wood D.W."/>
            <person name="Setubal J.C."/>
            <person name="Kaul R."/>
            <person name="Monks D.E."/>
            <person name="Kitajima J.P."/>
            <person name="Okura V.K."/>
            <person name="Zhou Y."/>
            <person name="Chen L."/>
            <person name="Wood G.E."/>
            <person name="Almeida N.F. Jr."/>
            <person name="Woo L."/>
            <person name="Chen Y."/>
            <person name="Paulsen I.T."/>
            <person name="Eisen J.A."/>
            <person name="Karp P.D."/>
            <person name="Bovee D. Sr."/>
            <person name="Chapman P."/>
            <person name="Clendenning J."/>
            <person name="Deatherage G."/>
            <person name="Gillet W."/>
            <person name="Grant C."/>
            <person name="Kutyavin T."/>
            <person name="Levy R."/>
            <person name="Li M.-J."/>
            <person name="McClelland E."/>
            <person name="Palmieri A."/>
            <person name="Raymond C."/>
            <person name="Rouse G."/>
            <person name="Saenphimmachak C."/>
            <person name="Wu Z."/>
            <person name="Romero P."/>
            <person name="Gordon D."/>
            <person name="Zhang S."/>
            <person name="Yoo H."/>
            <person name="Tao Y."/>
            <person name="Biddle P."/>
            <person name="Jung M."/>
            <person name="Krespan W."/>
            <person name="Perry M."/>
            <person name="Gordon-Kamm B."/>
            <person name="Liao L."/>
            <person name="Kim S."/>
            <person name="Hendrick C."/>
            <person name="Zhao Z.-Y."/>
            <person name="Dolan M."/>
            <person name="Chumley F."/>
            <person name="Tingey S.V."/>
            <person name="Tomb J.-F."/>
            <person name="Gordon M.P."/>
            <person name="Olson M.V."/>
            <person name="Nester E.W."/>
        </authorList>
    </citation>
    <scope>NUCLEOTIDE SEQUENCE [LARGE SCALE GENOMIC DNA]</scope>
    <source>
        <strain>C58 / ATCC 33970</strain>
    </source>
</reference>
<reference key="2">
    <citation type="journal article" date="2001" name="Science">
        <title>Genome sequence of the plant pathogen and biotechnology agent Agrobacterium tumefaciens C58.</title>
        <authorList>
            <person name="Goodner B."/>
            <person name="Hinkle G."/>
            <person name="Gattung S."/>
            <person name="Miller N."/>
            <person name="Blanchard M."/>
            <person name="Qurollo B."/>
            <person name="Goldman B.S."/>
            <person name="Cao Y."/>
            <person name="Askenazi M."/>
            <person name="Halling C."/>
            <person name="Mullin L."/>
            <person name="Houmiel K."/>
            <person name="Gordon J."/>
            <person name="Vaudin M."/>
            <person name="Iartchouk O."/>
            <person name="Epp A."/>
            <person name="Liu F."/>
            <person name="Wollam C."/>
            <person name="Allinger M."/>
            <person name="Doughty D."/>
            <person name="Scott C."/>
            <person name="Lappas C."/>
            <person name="Markelz B."/>
            <person name="Flanagan C."/>
            <person name="Crowell C."/>
            <person name="Gurson J."/>
            <person name="Lomo C."/>
            <person name="Sear C."/>
            <person name="Strub G."/>
            <person name="Cielo C."/>
            <person name="Slater S."/>
        </authorList>
    </citation>
    <scope>NUCLEOTIDE SEQUENCE [LARGE SCALE GENOMIC DNA]</scope>
    <source>
        <strain>C58 / ATCC 33970</strain>
    </source>
</reference>
<accession>Q8UAY9</accession>
<accession>Q7CRY1</accession>
<sequence>MSAPRYAELQVTTHFSFLRGASSCDELFEQAKNLGIEALGVVDRNSLAAIPRAYEAANNHGVRLVIGCRLDLDDDLSVLVYPMDRAAYGRLCRLLSVGKKRGGKGKCRLSWDDLVAYGEGLIVVLLADLADDLCALRLRRLKAAFADRAYMALSLRRRPNDQMRLFELSGMAQAAGVPTVVTNDVLFHVPERRMLQDVVTCIRHNCTIDEAGFRRERHADRYMKPPEEMHRLFARYPEALSRSLEIAKRCKFSLKELVYQYPEERSLPGLTAQQALEKMVWEAVPGRYPNGLPEKVEKALHHELDVVGRLQYASYFLTVNAIVRYARSKDILCQGRGSAANSVICFVLGITAIDPALFSNLVFERFVSENRGEPPDIDVDFEHQRREEVIQWVYDTYGRDKAALCSVVTRYRGRGALRDVGKVLGLPEDLTKLLSSQVWRWSEGVGEKQVKELNLNMEDRRLKLAFELANQLVGTPRHHSQHPGGFVLSHDRLDELVPIEPAAMNDRQIIEWDKDDIDIVKFMKMDCLALGMLSCMKRGFDLLEARTGEKYDLAAMPPDDPATFAMIQKADTLGTFQIESRAQMSMLPRLKPAKFYDLVIQVAIVRPGPIQGDMVHPYLRRRQGKEPVLYEKPQLENILKKTLGVPLFQEQAMRIAMDCADFTADEADQLRRAMATFKNVGTISKFKEKLVTGMVANGYDKEFAERIFKQLEGFGSYGFPESHAASFALIAYASSWLKCHHPDIFCTAILNSQPMGFYAPAQIVRDARDHGVEVRPVCVNNSRFDCTLEPTGKKNDKGEERFAVRLGLRMVKGLSNDHAADIVAARQDRPFASVDDLWRRAGVPAAALVCLAEADAFLPSLRLARREALWAIKALRDEPLPLFAAAAIRENAVIEELQEPSVALRPMTDGGEVVQDYGHVGLTLREHPMTFLRRDLSRRRIVTCAEAVRVRDGTWLETAGLVLVRQRPGSAKGVIFMTLEDETGIANAVLWVKTFEKYRRVVLSAGMVGIYGKIQREGEVVHLVAHRLTDLSHALASVGERNNAFPLPHGRGDEFHHGMPDDHRAIRKRPPPSNHDDDEVERIKVISRNFH</sequence>
<feature type="chain" id="PRO_0000103362" description="Error-prone DNA polymerase 1">
    <location>
        <begin position="1"/>
        <end position="1091"/>
    </location>
</feature>
<feature type="region of interest" description="Disordered" evidence="2">
    <location>
        <begin position="1051"/>
        <end position="1080"/>
    </location>
</feature>
<feature type="compositionally biased region" description="Basic and acidic residues" evidence="2">
    <location>
        <begin position="1051"/>
        <end position="1064"/>
    </location>
</feature>
<dbReference type="EC" id="2.7.7.7" evidence="1"/>
<dbReference type="EMBL" id="AE007870">
    <property type="protein sequence ID" value="AAK90161.1"/>
    <property type="molecule type" value="Genomic_DNA"/>
</dbReference>
<dbReference type="PIR" id="AF2953">
    <property type="entry name" value="AF2953"/>
</dbReference>
<dbReference type="PIR" id="G98329">
    <property type="entry name" value="G98329"/>
</dbReference>
<dbReference type="RefSeq" id="NP_357376.1">
    <property type="nucleotide sequence ID" value="NC_003063.2"/>
</dbReference>
<dbReference type="RefSeq" id="WP_010972863.1">
    <property type="nucleotide sequence ID" value="NC_003063.2"/>
</dbReference>
<dbReference type="SMR" id="Q8UAY9"/>
<dbReference type="STRING" id="176299.Atu3228"/>
<dbReference type="EnsemblBacteria" id="AAK90161">
    <property type="protein sequence ID" value="AAK90161"/>
    <property type="gene ID" value="Atu3228"/>
</dbReference>
<dbReference type="GeneID" id="1135102"/>
<dbReference type="KEGG" id="atu:Atu3228"/>
<dbReference type="PATRIC" id="fig|176299.10.peg.3069"/>
<dbReference type="eggNOG" id="COG0587">
    <property type="taxonomic scope" value="Bacteria"/>
</dbReference>
<dbReference type="HOGENOM" id="CLU_001600_4_0_5"/>
<dbReference type="OrthoDB" id="9803237at2"/>
<dbReference type="PhylomeDB" id="Q8UAY9"/>
<dbReference type="BioCyc" id="AGRO:ATU3228-MONOMER"/>
<dbReference type="Proteomes" id="UP000000813">
    <property type="component" value="Chromosome linear"/>
</dbReference>
<dbReference type="GO" id="GO:0005737">
    <property type="term" value="C:cytoplasm"/>
    <property type="evidence" value="ECO:0007669"/>
    <property type="project" value="UniProtKB-SubCell"/>
</dbReference>
<dbReference type="GO" id="GO:0008408">
    <property type="term" value="F:3'-5' exonuclease activity"/>
    <property type="evidence" value="ECO:0007669"/>
    <property type="project" value="InterPro"/>
</dbReference>
<dbReference type="GO" id="GO:0003887">
    <property type="term" value="F:DNA-directed DNA polymerase activity"/>
    <property type="evidence" value="ECO:0007669"/>
    <property type="project" value="UniProtKB-UniRule"/>
</dbReference>
<dbReference type="GO" id="GO:0003676">
    <property type="term" value="F:nucleic acid binding"/>
    <property type="evidence" value="ECO:0007669"/>
    <property type="project" value="InterPro"/>
</dbReference>
<dbReference type="GO" id="GO:0006281">
    <property type="term" value="P:DNA repair"/>
    <property type="evidence" value="ECO:0007669"/>
    <property type="project" value="UniProtKB-UniRule"/>
</dbReference>
<dbReference type="GO" id="GO:0006260">
    <property type="term" value="P:DNA replication"/>
    <property type="evidence" value="ECO:0007669"/>
    <property type="project" value="UniProtKB-KW"/>
</dbReference>
<dbReference type="GO" id="GO:0009432">
    <property type="term" value="P:SOS response"/>
    <property type="evidence" value="ECO:0000269"/>
    <property type="project" value="CollecTF"/>
</dbReference>
<dbReference type="CDD" id="cd04485">
    <property type="entry name" value="DnaE_OBF"/>
    <property type="match status" value="1"/>
</dbReference>
<dbReference type="CDD" id="cd07434">
    <property type="entry name" value="PHP_PolIIIA_DnaE2"/>
    <property type="match status" value="1"/>
</dbReference>
<dbReference type="FunFam" id="1.10.150.870:FF:000002">
    <property type="entry name" value="Error-prone DNA polymerase"/>
    <property type="match status" value="1"/>
</dbReference>
<dbReference type="FunFam" id="3.20.20.140:FF:000098">
    <property type="entry name" value="Error-prone DNA polymerase"/>
    <property type="match status" value="1"/>
</dbReference>
<dbReference type="Gene3D" id="1.10.150.870">
    <property type="match status" value="1"/>
</dbReference>
<dbReference type="Gene3D" id="3.20.20.140">
    <property type="entry name" value="Metal-dependent hydrolases"/>
    <property type="match status" value="1"/>
</dbReference>
<dbReference type="HAMAP" id="MF_01902">
    <property type="entry name" value="DNApol_error_prone"/>
    <property type="match status" value="1"/>
</dbReference>
<dbReference type="InterPro" id="IPR011708">
    <property type="entry name" value="DNA_pol3_alpha_NTPase_dom"/>
</dbReference>
<dbReference type="InterPro" id="IPR040982">
    <property type="entry name" value="DNA_pol3_finger"/>
</dbReference>
<dbReference type="InterPro" id="IPR023073">
    <property type="entry name" value="DnaE2"/>
</dbReference>
<dbReference type="InterPro" id="IPR004805">
    <property type="entry name" value="DnaE2/DnaE/PolC"/>
</dbReference>
<dbReference type="InterPro" id="IPR029460">
    <property type="entry name" value="DNAPol_HHH"/>
</dbReference>
<dbReference type="InterPro" id="IPR004365">
    <property type="entry name" value="NA-bd_OB_tRNA"/>
</dbReference>
<dbReference type="InterPro" id="IPR004013">
    <property type="entry name" value="PHP_dom"/>
</dbReference>
<dbReference type="InterPro" id="IPR003141">
    <property type="entry name" value="Pol/His_phosphatase_N"/>
</dbReference>
<dbReference type="InterPro" id="IPR016195">
    <property type="entry name" value="Pol/histidinol_Pase-like"/>
</dbReference>
<dbReference type="NCBIfam" id="TIGR00594">
    <property type="entry name" value="polc"/>
    <property type="match status" value="1"/>
</dbReference>
<dbReference type="NCBIfam" id="NF004225">
    <property type="entry name" value="PRK05672.1"/>
    <property type="match status" value="1"/>
</dbReference>
<dbReference type="PANTHER" id="PTHR32294">
    <property type="entry name" value="DNA POLYMERASE III SUBUNIT ALPHA"/>
    <property type="match status" value="1"/>
</dbReference>
<dbReference type="PANTHER" id="PTHR32294:SF4">
    <property type="entry name" value="ERROR-PRONE DNA POLYMERASE"/>
    <property type="match status" value="1"/>
</dbReference>
<dbReference type="Pfam" id="PF07733">
    <property type="entry name" value="DNA_pol3_alpha"/>
    <property type="match status" value="1"/>
</dbReference>
<dbReference type="Pfam" id="PF17657">
    <property type="entry name" value="DNA_pol3_finger"/>
    <property type="match status" value="1"/>
</dbReference>
<dbReference type="Pfam" id="PF14579">
    <property type="entry name" value="HHH_6"/>
    <property type="match status" value="1"/>
</dbReference>
<dbReference type="Pfam" id="PF02811">
    <property type="entry name" value="PHP"/>
    <property type="match status" value="1"/>
</dbReference>
<dbReference type="Pfam" id="PF01336">
    <property type="entry name" value="tRNA_anti-codon"/>
    <property type="match status" value="1"/>
</dbReference>
<dbReference type="SMART" id="SM00481">
    <property type="entry name" value="POLIIIAc"/>
    <property type="match status" value="1"/>
</dbReference>
<dbReference type="SUPFAM" id="SSF89550">
    <property type="entry name" value="PHP domain-like"/>
    <property type="match status" value="1"/>
</dbReference>